<keyword id="KW-0963">Cytoplasm</keyword>
<keyword id="KW-0413">Isomerase</keyword>
<keyword id="KW-0697">Rotamase</keyword>
<dbReference type="EC" id="5.2.1.8"/>
<dbReference type="EMBL" id="S82440">
    <property type="protein sequence ID" value="AAB37708.1"/>
    <property type="molecule type" value="mRNA"/>
</dbReference>
<dbReference type="SMR" id="P91791"/>
<dbReference type="GO" id="GO:0005737">
    <property type="term" value="C:cytoplasm"/>
    <property type="evidence" value="ECO:0007669"/>
    <property type="project" value="UniProtKB-SubCell"/>
</dbReference>
<dbReference type="GO" id="GO:0016018">
    <property type="term" value="F:cyclosporin A binding"/>
    <property type="evidence" value="ECO:0007669"/>
    <property type="project" value="TreeGrafter"/>
</dbReference>
<dbReference type="GO" id="GO:0003755">
    <property type="term" value="F:peptidyl-prolyl cis-trans isomerase activity"/>
    <property type="evidence" value="ECO:0007669"/>
    <property type="project" value="UniProtKB-KW"/>
</dbReference>
<dbReference type="GO" id="GO:0006457">
    <property type="term" value="P:protein folding"/>
    <property type="evidence" value="ECO:0007669"/>
    <property type="project" value="InterPro"/>
</dbReference>
<dbReference type="CDD" id="cd01926">
    <property type="entry name" value="cyclophilin_ABH_like"/>
    <property type="match status" value="1"/>
</dbReference>
<dbReference type="FunFam" id="2.40.100.10:FF:000013">
    <property type="entry name" value="Peptidyl-prolyl cis-trans isomerase"/>
    <property type="match status" value="1"/>
</dbReference>
<dbReference type="Gene3D" id="2.40.100.10">
    <property type="entry name" value="Cyclophilin-like"/>
    <property type="match status" value="1"/>
</dbReference>
<dbReference type="InterPro" id="IPR029000">
    <property type="entry name" value="Cyclophilin-like_dom_sf"/>
</dbReference>
<dbReference type="InterPro" id="IPR024936">
    <property type="entry name" value="Cyclophilin-type_PPIase"/>
</dbReference>
<dbReference type="InterPro" id="IPR020892">
    <property type="entry name" value="Cyclophilin-type_PPIase_CS"/>
</dbReference>
<dbReference type="InterPro" id="IPR002130">
    <property type="entry name" value="Cyclophilin-type_PPIase_dom"/>
</dbReference>
<dbReference type="PANTHER" id="PTHR11071">
    <property type="entry name" value="PEPTIDYL-PROLYL CIS-TRANS ISOMERASE"/>
    <property type="match status" value="1"/>
</dbReference>
<dbReference type="PANTHER" id="PTHR11071:SF561">
    <property type="entry name" value="PEPTIDYL-PROLYL CIS-TRANS ISOMERASE D-RELATED"/>
    <property type="match status" value="1"/>
</dbReference>
<dbReference type="Pfam" id="PF00160">
    <property type="entry name" value="Pro_isomerase"/>
    <property type="match status" value="1"/>
</dbReference>
<dbReference type="PIRSF" id="PIRSF001467">
    <property type="entry name" value="Peptidylpro_ismrse"/>
    <property type="match status" value="1"/>
</dbReference>
<dbReference type="PRINTS" id="PR00153">
    <property type="entry name" value="CSAPPISMRASE"/>
</dbReference>
<dbReference type="SUPFAM" id="SSF50891">
    <property type="entry name" value="Cyclophilin-like"/>
    <property type="match status" value="1"/>
</dbReference>
<dbReference type="PROSITE" id="PS00170">
    <property type="entry name" value="CSA_PPIASE_1"/>
    <property type="match status" value="1"/>
</dbReference>
<dbReference type="PROSITE" id="PS50072">
    <property type="entry name" value="CSA_PPIASE_2"/>
    <property type="match status" value="1"/>
</dbReference>
<sequence length="164" mass="17678">MAKPQVFFDLQANGENLGRIVMELRADVVPKTAENFRALCTGEKGFGYKGSTFHRVIPGFMCQGGDFTRHNGTGGKSIYGEKFADENFTLKHTQPGILSMANAGVNTNGSQFFICTAVTSWLDGKHVVFGAVTQGLDIIKKVESYGSDSGKTSKKITIADCGQL</sequence>
<protein>
    <recommendedName>
        <fullName>Peptidyl-prolyl cis-trans isomerase</fullName>
        <shortName>PPIase</shortName>
        <ecNumber>5.2.1.8</ecNumber>
    </recommendedName>
    <alternativeName>
        <fullName>Cyclophilin</fullName>
    </alternativeName>
    <alternativeName>
        <fullName>Cyclosporin A-binding protein</fullName>
    </alternativeName>
    <alternativeName>
        <fullName>Rotamase</fullName>
    </alternativeName>
</protein>
<proteinExistence type="evidence at transcript level"/>
<accession>P91791</accession>
<feature type="chain" id="PRO_0000064125" description="Peptidyl-prolyl cis-trans isomerase">
    <location>
        <begin position="1"/>
        <end position="164"/>
    </location>
</feature>
<feature type="domain" description="PPIase cyclophilin-type" evidence="2">
    <location>
        <begin position="7"/>
        <end position="163"/>
    </location>
</feature>
<name>PPIA_HEMPU</name>
<evidence type="ECO:0000250" key="1"/>
<evidence type="ECO:0000255" key="2">
    <source>
        <dbReference type="PROSITE-ProRule" id="PRU00156"/>
    </source>
</evidence>
<evidence type="ECO:0000305" key="3"/>
<comment type="function">
    <text>PPIases accelerate the folding of proteins. It catalyzes the cis-trans isomerization of proline imidic peptide bonds in oligopeptides.</text>
</comment>
<comment type="catalytic activity">
    <reaction>
        <text>[protein]-peptidylproline (omega=180) = [protein]-peptidylproline (omega=0)</text>
        <dbReference type="Rhea" id="RHEA:16237"/>
        <dbReference type="Rhea" id="RHEA-COMP:10747"/>
        <dbReference type="Rhea" id="RHEA-COMP:10748"/>
        <dbReference type="ChEBI" id="CHEBI:83833"/>
        <dbReference type="ChEBI" id="CHEBI:83834"/>
        <dbReference type="EC" id="5.2.1.8"/>
    </reaction>
</comment>
<comment type="activity regulation">
    <text>Binds cyclosporin A (CsA). CsA mediates some of its effects via an inhibitory action on PPIase.</text>
</comment>
<comment type="subcellular location">
    <subcellularLocation>
        <location evidence="1">Cytoplasm</location>
    </subcellularLocation>
</comment>
<comment type="developmental stage">
    <text>Predominantly expressed during gastrulation. Expression first seen in early blastula stage.</text>
</comment>
<comment type="similarity">
    <text evidence="3">Belongs to the cyclophilin-type PPIase family. PPIase A subfamily.</text>
</comment>
<organism>
    <name type="scientific">Hemicentrotus pulcherrimus</name>
    <name type="common">Sea urchin</name>
    <name type="synonym">Strongylocentrotus pulcherrimus</name>
    <dbReference type="NCBI Taxonomy" id="7650"/>
    <lineage>
        <taxon>Eukaryota</taxon>
        <taxon>Metazoa</taxon>
        <taxon>Echinodermata</taxon>
        <taxon>Eleutherozoa</taxon>
        <taxon>Echinozoa</taxon>
        <taxon>Echinoidea</taxon>
        <taxon>Euechinoidea</taxon>
        <taxon>Echinacea</taxon>
        <taxon>Camarodonta</taxon>
        <taxon>Echinidea</taxon>
        <taxon>Strongylocentrotidae</taxon>
        <taxon>Hemicentrotus</taxon>
    </lineage>
</organism>
<reference key="1">
    <citation type="journal article" date="1996" name="Zool. Sci.">
        <title>Nucleotide sequence of a cDNA coding for cyclophilin of the sea urchin Hemicentrotus pulcherrimus.</title>
        <authorList>
            <person name="Ohta K."/>
            <person name="Nakazawa T."/>
        </authorList>
    </citation>
    <scope>NUCLEOTIDE SEQUENCE [MRNA]</scope>
    <source>
        <tissue>Larva</tissue>
    </source>
</reference>